<comment type="function">
    <text evidence="1">Required for normal Golgi function.</text>
</comment>
<comment type="subunit">
    <text evidence="1">Component of the conserved oligomeric Golgi complex which is composed of eight different subunits and is required for normal Golgi morphology and localization.</text>
</comment>
<comment type="subcellular location">
    <subcellularLocation>
        <location evidence="1">Golgi apparatus membrane</location>
        <topology evidence="1">Peripheral membrane protein</topology>
    </subcellularLocation>
</comment>
<comment type="similarity">
    <text evidence="3">Belongs to the COG3 family.</text>
</comment>
<proteinExistence type="inferred from homology"/>
<organism>
    <name type="scientific">Dictyostelium discoideum</name>
    <name type="common">Social amoeba</name>
    <dbReference type="NCBI Taxonomy" id="44689"/>
    <lineage>
        <taxon>Eukaryota</taxon>
        <taxon>Amoebozoa</taxon>
        <taxon>Evosea</taxon>
        <taxon>Eumycetozoa</taxon>
        <taxon>Dictyostelia</taxon>
        <taxon>Dictyosteliales</taxon>
        <taxon>Dictyosteliaceae</taxon>
        <taxon>Dictyostelium</taxon>
    </lineage>
</organism>
<protein>
    <recommendedName>
        <fullName>Conserved oligomeric Golgi complex subunit 3</fullName>
        <shortName>COG complex subunit 3</shortName>
    </recommendedName>
    <alternativeName>
        <fullName>Component of oligomeric Golgi complex 3</fullName>
    </alternativeName>
</protein>
<feature type="chain" id="PRO_0000341682" description="Conserved oligomeric Golgi complex subunit 3">
    <location>
        <begin position="1"/>
        <end position="925"/>
    </location>
</feature>
<feature type="region of interest" description="Disordered" evidence="2">
    <location>
        <begin position="68"/>
        <end position="88"/>
    </location>
</feature>
<feature type="region of interest" description="Disordered" evidence="2">
    <location>
        <begin position="416"/>
        <end position="446"/>
    </location>
</feature>
<feature type="region of interest" description="Disordered" evidence="2">
    <location>
        <begin position="863"/>
        <end position="925"/>
    </location>
</feature>
<feature type="compositionally biased region" description="Low complexity" evidence="2">
    <location>
        <begin position="71"/>
        <end position="88"/>
    </location>
</feature>
<feature type="compositionally biased region" description="Low complexity" evidence="2">
    <location>
        <begin position="418"/>
        <end position="446"/>
    </location>
</feature>
<feature type="compositionally biased region" description="Low complexity" evidence="2">
    <location>
        <begin position="867"/>
        <end position="904"/>
    </location>
</feature>
<name>COG3_DICDI</name>
<dbReference type="EMBL" id="AAFI02000041">
    <property type="protein sequence ID" value="EAL66737.1"/>
    <property type="molecule type" value="Genomic_DNA"/>
</dbReference>
<dbReference type="RefSeq" id="XP_640727.1">
    <property type="nucleotide sequence ID" value="XM_635635.1"/>
</dbReference>
<dbReference type="FunCoup" id="Q54TT4">
    <property type="interactions" value="787"/>
</dbReference>
<dbReference type="STRING" id="44689.Q54TT4"/>
<dbReference type="PaxDb" id="44689-DDB0237869"/>
<dbReference type="EnsemblProtists" id="EAL66737">
    <property type="protein sequence ID" value="EAL66737"/>
    <property type="gene ID" value="DDB_G0281511"/>
</dbReference>
<dbReference type="GeneID" id="8623116"/>
<dbReference type="KEGG" id="ddi:DDB_G0281511"/>
<dbReference type="dictyBase" id="DDB_G0281511">
    <property type="gene designation" value="cog3"/>
</dbReference>
<dbReference type="VEuPathDB" id="AmoebaDB:DDB_G0281511"/>
<dbReference type="eggNOG" id="KOG2604">
    <property type="taxonomic scope" value="Eukaryota"/>
</dbReference>
<dbReference type="HOGENOM" id="CLU_011639_1_1_1"/>
<dbReference type="InParanoid" id="Q54TT4"/>
<dbReference type="OMA" id="DEFELWG"/>
<dbReference type="PhylomeDB" id="Q54TT4"/>
<dbReference type="Reactome" id="R-DDI-6807878">
    <property type="pathway name" value="COPI-mediated anterograde transport"/>
</dbReference>
<dbReference type="Reactome" id="R-DDI-6811438">
    <property type="pathway name" value="Intra-Golgi traffic"/>
</dbReference>
<dbReference type="PRO" id="PR:Q54TT4"/>
<dbReference type="Proteomes" id="UP000002195">
    <property type="component" value="Chromosome 3"/>
</dbReference>
<dbReference type="GO" id="GO:0005801">
    <property type="term" value="C:cis-Golgi network"/>
    <property type="evidence" value="ECO:0007669"/>
    <property type="project" value="InterPro"/>
</dbReference>
<dbReference type="GO" id="GO:0000139">
    <property type="term" value="C:Golgi membrane"/>
    <property type="evidence" value="ECO:0007669"/>
    <property type="project" value="UniProtKB-SubCell"/>
</dbReference>
<dbReference type="GO" id="GO:0017119">
    <property type="term" value="C:Golgi transport complex"/>
    <property type="evidence" value="ECO:0000318"/>
    <property type="project" value="GO_Central"/>
</dbReference>
<dbReference type="GO" id="GO:0007030">
    <property type="term" value="P:Golgi organization"/>
    <property type="evidence" value="ECO:0000318"/>
    <property type="project" value="GO_Central"/>
</dbReference>
<dbReference type="GO" id="GO:0006891">
    <property type="term" value="P:intra-Golgi vesicle-mediated transport"/>
    <property type="evidence" value="ECO:0000318"/>
    <property type="project" value="GO_Central"/>
</dbReference>
<dbReference type="GO" id="GO:0006886">
    <property type="term" value="P:intracellular protein transport"/>
    <property type="evidence" value="ECO:0007669"/>
    <property type="project" value="InterPro"/>
</dbReference>
<dbReference type="InterPro" id="IPR048685">
    <property type="entry name" value="COG3_C"/>
</dbReference>
<dbReference type="InterPro" id="IPR048320">
    <property type="entry name" value="COG3_N"/>
</dbReference>
<dbReference type="InterPro" id="IPR007265">
    <property type="entry name" value="COG_su3"/>
</dbReference>
<dbReference type="PANTHER" id="PTHR13302">
    <property type="entry name" value="CONSERVED OLIGOMERIC GOLGI COMPLEX COMPONENT 3"/>
    <property type="match status" value="1"/>
</dbReference>
<dbReference type="PANTHER" id="PTHR13302:SF8">
    <property type="entry name" value="CONSERVED OLIGOMERIC GOLGI COMPLEX SUBUNIT 3"/>
    <property type="match status" value="1"/>
</dbReference>
<dbReference type="Pfam" id="PF20671">
    <property type="entry name" value="COG3_C"/>
    <property type="match status" value="1"/>
</dbReference>
<dbReference type="Pfam" id="PF04136">
    <property type="entry name" value="COG3_N"/>
    <property type="match status" value="1"/>
</dbReference>
<keyword id="KW-0333">Golgi apparatus</keyword>
<keyword id="KW-0472">Membrane</keyword>
<keyword id="KW-0653">Protein transport</keyword>
<keyword id="KW-1185">Reference proteome</keyword>
<keyword id="KW-0813">Transport</keyword>
<sequence length="925" mass="107427">MNNQTNQQSQTQSQSQQRINFDITGWEKKSKLSTQQYLLINNLNKSTQEKPLPQKYLEDKINNDIKKEENQQLQQQQQQQQQQQQQQQSPIIENFMDNFNPKTDIDNLSDFYQWYSIIDKNNPHLHQYEWFLETIVNYSKGSNQLLSMVENCDKLVESIQTDYSNLTKKTNQLNEDCEKFFNEELKLRYIAQSIHDKLKFYNQLEIQTKKFNTTNFNVTDSTFLTSLENLENSINFMKSNSTFMESNKYLTQYGFIFSRALGLIKDYISSNLKILSRDIINAQKQLKTSVSTPTSPQLQSSSGGSPLINDFSNSTDFNDLFQHSNIRFRAFAPKLRPLCLELEKRAIGPYLSYLYDTQNIYFNNRRSILSLIMFEKLQSLSKMTDISSMIRSSSLFMIQFYENEYQIYSNFFSPPDLNNNNNNNNNNNNNDNINNSTNINNSNNTNNNNQDIINNCPAFSNILDEYSQQLYDTIRPIYIHIHSFETLCNLAHLIRNELIDDLVQKSMKYSNGFKMTIERMLQDIQERLIFIIQTYIRDEIRSYHPNSDDLDYPNKLKIYVTAESTAVDGDGNGSGNSSPTLSYKSIYSTWYPTLEKSLTCLSKLYLVLETRIFEGLAQEVVEACTFTLIQASRLLLIQQKNDPYIILDSQLFLIKNLLTLREQIAPFDINFVIIEKIVDFPNLKHSLSTLYNVGSFLTLSTNNPILSLLSPRVTNTSIDSKKDLEKELKQSIESFILSNANTIIDPLLSLLTKISVFLNQSNKNQTDPMLLSQQSFADPQRIKEIIEQVKEKASNYLPQVIDRMKLYLSISTQILLMKPIRTNIIDSFDQINQYTKKYYTEDQIKIIDLQSLKLILDKILTPSKQSNNNNNNNNNNNNNNNNNNNNNNNNNNNNNNNNNNNNKNENNENENENNSNVNSPSPQQL</sequence>
<reference key="1">
    <citation type="journal article" date="2005" name="Nature">
        <title>The genome of the social amoeba Dictyostelium discoideum.</title>
        <authorList>
            <person name="Eichinger L."/>
            <person name="Pachebat J.A."/>
            <person name="Gloeckner G."/>
            <person name="Rajandream M.A."/>
            <person name="Sucgang R."/>
            <person name="Berriman M."/>
            <person name="Song J."/>
            <person name="Olsen R."/>
            <person name="Szafranski K."/>
            <person name="Xu Q."/>
            <person name="Tunggal B."/>
            <person name="Kummerfeld S."/>
            <person name="Madera M."/>
            <person name="Konfortov B.A."/>
            <person name="Rivero F."/>
            <person name="Bankier A.T."/>
            <person name="Lehmann R."/>
            <person name="Hamlin N."/>
            <person name="Davies R."/>
            <person name="Gaudet P."/>
            <person name="Fey P."/>
            <person name="Pilcher K."/>
            <person name="Chen G."/>
            <person name="Saunders D."/>
            <person name="Sodergren E.J."/>
            <person name="Davis P."/>
            <person name="Kerhornou A."/>
            <person name="Nie X."/>
            <person name="Hall N."/>
            <person name="Anjard C."/>
            <person name="Hemphill L."/>
            <person name="Bason N."/>
            <person name="Farbrother P."/>
            <person name="Desany B."/>
            <person name="Just E."/>
            <person name="Morio T."/>
            <person name="Rost R."/>
            <person name="Churcher C.M."/>
            <person name="Cooper J."/>
            <person name="Haydock S."/>
            <person name="van Driessche N."/>
            <person name="Cronin A."/>
            <person name="Goodhead I."/>
            <person name="Muzny D.M."/>
            <person name="Mourier T."/>
            <person name="Pain A."/>
            <person name="Lu M."/>
            <person name="Harper D."/>
            <person name="Lindsay R."/>
            <person name="Hauser H."/>
            <person name="James K.D."/>
            <person name="Quiles M."/>
            <person name="Madan Babu M."/>
            <person name="Saito T."/>
            <person name="Buchrieser C."/>
            <person name="Wardroper A."/>
            <person name="Felder M."/>
            <person name="Thangavelu M."/>
            <person name="Johnson D."/>
            <person name="Knights A."/>
            <person name="Loulseged H."/>
            <person name="Mungall K.L."/>
            <person name="Oliver K."/>
            <person name="Price C."/>
            <person name="Quail M.A."/>
            <person name="Urushihara H."/>
            <person name="Hernandez J."/>
            <person name="Rabbinowitsch E."/>
            <person name="Steffen D."/>
            <person name="Sanders M."/>
            <person name="Ma J."/>
            <person name="Kohara Y."/>
            <person name="Sharp S."/>
            <person name="Simmonds M.N."/>
            <person name="Spiegler S."/>
            <person name="Tivey A."/>
            <person name="Sugano S."/>
            <person name="White B."/>
            <person name="Walker D."/>
            <person name="Woodward J.R."/>
            <person name="Winckler T."/>
            <person name="Tanaka Y."/>
            <person name="Shaulsky G."/>
            <person name="Schleicher M."/>
            <person name="Weinstock G.M."/>
            <person name="Rosenthal A."/>
            <person name="Cox E.C."/>
            <person name="Chisholm R.L."/>
            <person name="Gibbs R.A."/>
            <person name="Loomis W.F."/>
            <person name="Platzer M."/>
            <person name="Kay R.R."/>
            <person name="Williams J.G."/>
            <person name="Dear P.H."/>
            <person name="Noegel A.A."/>
            <person name="Barrell B.G."/>
            <person name="Kuspa A."/>
        </authorList>
    </citation>
    <scope>NUCLEOTIDE SEQUENCE [LARGE SCALE GENOMIC DNA]</scope>
    <source>
        <strain>AX4</strain>
    </source>
</reference>
<evidence type="ECO:0000250" key="1"/>
<evidence type="ECO:0000256" key="2">
    <source>
        <dbReference type="SAM" id="MobiDB-lite"/>
    </source>
</evidence>
<evidence type="ECO:0000305" key="3"/>
<accession>Q54TT4</accession>
<gene>
    <name type="primary">cog3</name>
    <name type="ORF">DDB_G0281511</name>
</gene>